<comment type="function">
    <text evidence="1">Bifunctional enzyme with both catalase and broad-spectrum peroxidase activity.</text>
</comment>
<comment type="catalytic activity">
    <reaction evidence="1">
        <text>H2O2 + AH2 = A + 2 H2O</text>
        <dbReference type="Rhea" id="RHEA:30275"/>
        <dbReference type="ChEBI" id="CHEBI:13193"/>
        <dbReference type="ChEBI" id="CHEBI:15377"/>
        <dbReference type="ChEBI" id="CHEBI:16240"/>
        <dbReference type="ChEBI" id="CHEBI:17499"/>
        <dbReference type="EC" id="1.11.1.21"/>
    </reaction>
</comment>
<comment type="catalytic activity">
    <reaction evidence="1">
        <text>2 H2O2 = O2 + 2 H2O</text>
        <dbReference type="Rhea" id="RHEA:20309"/>
        <dbReference type="ChEBI" id="CHEBI:15377"/>
        <dbReference type="ChEBI" id="CHEBI:15379"/>
        <dbReference type="ChEBI" id="CHEBI:16240"/>
        <dbReference type="EC" id="1.11.1.21"/>
    </reaction>
</comment>
<comment type="cofactor">
    <cofactor evidence="1">
        <name>heme b</name>
        <dbReference type="ChEBI" id="CHEBI:60344"/>
    </cofactor>
    <text evidence="1">Binds 1 heme b (iron(II)-protoporphyrin IX) group per dimer.</text>
</comment>
<comment type="subunit">
    <text evidence="1">Homodimer or homotetramer.</text>
</comment>
<comment type="PTM">
    <text evidence="1">Formation of the three residue Trp-Tyr-Met cross-link is important for the catalase, but not the peroxidase activity of the enzyme.</text>
</comment>
<comment type="similarity">
    <text evidence="1">Belongs to the peroxidase family. Peroxidase/catalase subfamily.</text>
</comment>
<feature type="chain" id="PRO_0000354970" description="Catalase-peroxidase">
    <location>
        <begin position="1"/>
        <end position="713"/>
    </location>
</feature>
<feature type="active site" description="Proton acceptor" evidence="1">
    <location>
        <position position="78"/>
    </location>
</feature>
<feature type="binding site" description="axial binding residue" evidence="1">
    <location>
        <position position="241"/>
    </location>
    <ligand>
        <name>heme b</name>
        <dbReference type="ChEBI" id="CHEBI:60344"/>
    </ligand>
    <ligandPart>
        <name>Fe</name>
        <dbReference type="ChEBI" id="CHEBI:18248"/>
    </ligandPart>
</feature>
<feature type="site" description="Transition state stabilizer" evidence="1">
    <location>
        <position position="74"/>
    </location>
</feature>
<feature type="cross-link" description="Tryptophyl-tyrosyl-methioninium (Trp-Tyr) (with M-226)" evidence="1">
    <location>
        <begin position="77"/>
        <end position="200"/>
    </location>
</feature>
<feature type="cross-link" description="Tryptophyl-tyrosyl-methioninium (Tyr-Met) (with W-77)" evidence="1">
    <location>
        <begin position="200"/>
        <end position="226"/>
    </location>
</feature>
<evidence type="ECO:0000255" key="1">
    <source>
        <dbReference type="HAMAP-Rule" id="MF_01961"/>
    </source>
</evidence>
<dbReference type="EC" id="1.11.1.21" evidence="1"/>
<dbReference type="EMBL" id="CR936257">
    <property type="protein sequence ID" value="CAI49445.1"/>
    <property type="molecule type" value="Genomic_DNA"/>
</dbReference>
<dbReference type="RefSeq" id="WP_011323070.1">
    <property type="nucleotide sequence ID" value="NC_007426.1"/>
</dbReference>
<dbReference type="SMR" id="Q3IQZ9"/>
<dbReference type="STRING" id="348780.NP_2708A"/>
<dbReference type="PeroxiBase" id="2515">
    <property type="entry name" value="NpCP01"/>
</dbReference>
<dbReference type="EnsemblBacteria" id="CAI49445">
    <property type="protein sequence ID" value="CAI49445"/>
    <property type="gene ID" value="NP_2708A"/>
</dbReference>
<dbReference type="GeneID" id="3703016"/>
<dbReference type="KEGG" id="nph:NP_2708A"/>
<dbReference type="eggNOG" id="arCOG04487">
    <property type="taxonomic scope" value="Archaea"/>
</dbReference>
<dbReference type="HOGENOM" id="CLU_025424_2_0_2"/>
<dbReference type="OrthoDB" id="358790at2157"/>
<dbReference type="Proteomes" id="UP000002698">
    <property type="component" value="Chromosome"/>
</dbReference>
<dbReference type="GO" id="GO:0005829">
    <property type="term" value="C:cytosol"/>
    <property type="evidence" value="ECO:0007669"/>
    <property type="project" value="TreeGrafter"/>
</dbReference>
<dbReference type="GO" id="GO:0004096">
    <property type="term" value="F:catalase activity"/>
    <property type="evidence" value="ECO:0007669"/>
    <property type="project" value="UniProtKB-UniRule"/>
</dbReference>
<dbReference type="GO" id="GO:0020037">
    <property type="term" value="F:heme binding"/>
    <property type="evidence" value="ECO:0007669"/>
    <property type="project" value="InterPro"/>
</dbReference>
<dbReference type="GO" id="GO:0046872">
    <property type="term" value="F:metal ion binding"/>
    <property type="evidence" value="ECO:0007669"/>
    <property type="project" value="UniProtKB-KW"/>
</dbReference>
<dbReference type="GO" id="GO:0070301">
    <property type="term" value="P:cellular response to hydrogen peroxide"/>
    <property type="evidence" value="ECO:0007669"/>
    <property type="project" value="TreeGrafter"/>
</dbReference>
<dbReference type="GO" id="GO:0042744">
    <property type="term" value="P:hydrogen peroxide catabolic process"/>
    <property type="evidence" value="ECO:0007669"/>
    <property type="project" value="UniProtKB-KW"/>
</dbReference>
<dbReference type="CDD" id="cd08200">
    <property type="entry name" value="catalase_peroxidase_2"/>
    <property type="match status" value="1"/>
</dbReference>
<dbReference type="FunFam" id="1.10.420.10:FF:000004">
    <property type="entry name" value="Catalase-peroxidase"/>
    <property type="match status" value="1"/>
</dbReference>
<dbReference type="FunFam" id="1.10.520.10:FF:000002">
    <property type="entry name" value="Catalase-peroxidase"/>
    <property type="match status" value="1"/>
</dbReference>
<dbReference type="Gene3D" id="1.10.520.10">
    <property type="match status" value="2"/>
</dbReference>
<dbReference type="Gene3D" id="1.10.420.10">
    <property type="entry name" value="Peroxidase, domain 2"/>
    <property type="match status" value="2"/>
</dbReference>
<dbReference type="HAMAP" id="MF_01961">
    <property type="entry name" value="Catal_peroxid"/>
    <property type="match status" value="1"/>
</dbReference>
<dbReference type="InterPro" id="IPR000763">
    <property type="entry name" value="Catalase_peroxidase"/>
</dbReference>
<dbReference type="InterPro" id="IPR002016">
    <property type="entry name" value="Haem_peroxidase"/>
</dbReference>
<dbReference type="InterPro" id="IPR010255">
    <property type="entry name" value="Haem_peroxidase_sf"/>
</dbReference>
<dbReference type="InterPro" id="IPR019794">
    <property type="entry name" value="Peroxidases_AS"/>
</dbReference>
<dbReference type="InterPro" id="IPR019793">
    <property type="entry name" value="Peroxidases_heam-ligand_BS"/>
</dbReference>
<dbReference type="NCBIfam" id="TIGR00198">
    <property type="entry name" value="cat_per_HPI"/>
    <property type="match status" value="1"/>
</dbReference>
<dbReference type="NCBIfam" id="NF011635">
    <property type="entry name" value="PRK15061.1"/>
    <property type="match status" value="1"/>
</dbReference>
<dbReference type="PANTHER" id="PTHR30555:SF0">
    <property type="entry name" value="CATALASE-PEROXIDASE"/>
    <property type="match status" value="1"/>
</dbReference>
<dbReference type="PANTHER" id="PTHR30555">
    <property type="entry name" value="HYDROPEROXIDASE I, BIFUNCTIONAL CATALASE-PEROXIDASE"/>
    <property type="match status" value="1"/>
</dbReference>
<dbReference type="Pfam" id="PF00141">
    <property type="entry name" value="peroxidase"/>
    <property type="match status" value="2"/>
</dbReference>
<dbReference type="PRINTS" id="PR00460">
    <property type="entry name" value="BPEROXIDASE"/>
</dbReference>
<dbReference type="PRINTS" id="PR00458">
    <property type="entry name" value="PEROXIDASE"/>
</dbReference>
<dbReference type="SUPFAM" id="SSF48113">
    <property type="entry name" value="Heme-dependent peroxidases"/>
    <property type="match status" value="2"/>
</dbReference>
<dbReference type="PROSITE" id="PS00435">
    <property type="entry name" value="PEROXIDASE_1"/>
    <property type="match status" value="1"/>
</dbReference>
<dbReference type="PROSITE" id="PS00436">
    <property type="entry name" value="PEROXIDASE_2"/>
    <property type="match status" value="1"/>
</dbReference>
<dbReference type="PROSITE" id="PS50873">
    <property type="entry name" value="PEROXIDASE_4"/>
    <property type="match status" value="1"/>
</dbReference>
<accession>Q3IQZ9</accession>
<gene>
    <name evidence="1" type="primary">katG</name>
    <name type="ordered locus">NP_2708A</name>
</gene>
<organism>
    <name type="scientific">Natronomonas pharaonis (strain ATCC 35678 / DSM 2160 / CIP 103997 / JCM 8858 / NBRC 14720 / NCIMB 2260 / Gabara)</name>
    <name type="common">Halobacterium pharaonis</name>
    <dbReference type="NCBI Taxonomy" id="348780"/>
    <lineage>
        <taxon>Archaea</taxon>
        <taxon>Methanobacteriati</taxon>
        <taxon>Methanobacteriota</taxon>
        <taxon>Stenosarchaea group</taxon>
        <taxon>Halobacteria</taxon>
        <taxon>Halobacteriales</taxon>
        <taxon>Haloarculaceae</taxon>
        <taxon>Natronomonas</taxon>
    </lineage>
</organism>
<name>KATG_NATPD</name>
<reference key="1">
    <citation type="journal article" date="2005" name="Genome Res.">
        <title>Living with two extremes: conclusions from the genome sequence of Natronomonas pharaonis.</title>
        <authorList>
            <person name="Falb M."/>
            <person name="Pfeiffer F."/>
            <person name="Palm P."/>
            <person name="Rodewald K."/>
            <person name="Hickmann V."/>
            <person name="Tittor J."/>
            <person name="Oesterhelt D."/>
        </authorList>
    </citation>
    <scope>NUCLEOTIDE SEQUENCE [LARGE SCALE GENOMIC DNA]</scope>
    <source>
        <strain>ATCC 35678 / DSM 2160 / CIP 103997 / JCM 8858 / NBRC 14720 / NCIMB 2260 / Gabara</strain>
    </source>
</reference>
<keyword id="KW-0349">Heme</keyword>
<keyword id="KW-0376">Hydrogen peroxide</keyword>
<keyword id="KW-0408">Iron</keyword>
<keyword id="KW-0479">Metal-binding</keyword>
<keyword id="KW-0560">Oxidoreductase</keyword>
<keyword id="KW-0575">Peroxidase</keyword>
<keyword id="KW-1185">Reference proteome</keyword>
<proteinExistence type="inferred from homology"/>
<sequence length="713" mass="79455">MSIDYKKLWPEALDFESLDQNAQHVDPKDEDFDYAEAFQELDLEEVKQDIESVMTDSQEWWPADYGHYGPLFIRMAWHSAGTYRTTDGRGGASGGYQRLPPVDSWPDNANLDKARRVLWPVKQKYGQNLSWADLIVLAGNVALESMGFETFGFAGGREDDFAPDESVDWGPEEEMEASDRYDEAGELPEPLGATVMGLIYVNPEGPDGEPDLEGSAANIRESFGRMAMNDEETVALIAGGHTFGKVHGADDPDEHVGGPPADAPIDLQGLGWENDFGEGKGPDTITSGIEGPWNTTPTQWDMSYIDNLLDYEWWPEKGPGGAWQWTTESGELDAAAPSVDGSSEKEDVMMLTTDVALKRDPDYREVLERFQENPDEFQEAFAKAWYKLIHRDMGPPERFLGPEVPEETLIWQDPLPDADYDSIGDEEVAELKEALLDSELSVAQLVKTAWASASTYRDSDKRGGANGARIRLEPQRSWEVNEPAALADALETYEAIQEEFNSARSDAVRVSLADLIVLGGNAAVEQAAADAGYDVTVPFEPGRTDATPEQTDVESFEALKPKADGFRNYLSDEAERKPEELLVDKADLLNLTPPEMTVLVGGMRALGATYQDTDRGVFTDEPGTLTNDFFVNILDMDYEWEPVSEDREVFELRDRETGEVEWEGTRFDLIFGSDSRLRAISEVYGADDGEAEFVEDFVDTWSKVMKLDRFDLE</sequence>
<protein>
    <recommendedName>
        <fullName evidence="1">Catalase-peroxidase</fullName>
        <shortName evidence="1">CP</shortName>
        <ecNumber evidence="1">1.11.1.21</ecNumber>
    </recommendedName>
    <alternativeName>
        <fullName evidence="1">Peroxidase/catalase</fullName>
    </alternativeName>
</protein>